<accession>Q9ZBX9</accession>
<dbReference type="EC" id="2.7.1.-"/>
<dbReference type="EMBL" id="AL939118">
    <property type="protein sequence ID" value="CAA22225.1"/>
    <property type="molecule type" value="Genomic_DNA"/>
</dbReference>
<dbReference type="PIR" id="T36059">
    <property type="entry name" value="T36059"/>
</dbReference>
<dbReference type="RefSeq" id="NP_628137.1">
    <property type="nucleotide sequence ID" value="NC_003888.3"/>
</dbReference>
<dbReference type="RefSeq" id="WP_011029338.1">
    <property type="nucleotide sequence ID" value="NZ_VNID01000003.1"/>
</dbReference>
<dbReference type="SMR" id="Q9ZBX9"/>
<dbReference type="STRING" id="100226.gene:17761580"/>
<dbReference type="PaxDb" id="100226-SCO3953"/>
<dbReference type="KEGG" id="sco:SCO3953"/>
<dbReference type="PATRIC" id="fig|100226.15.peg.4025"/>
<dbReference type="eggNOG" id="COG1859">
    <property type="taxonomic scope" value="Bacteria"/>
</dbReference>
<dbReference type="HOGENOM" id="CLU_052998_4_0_11"/>
<dbReference type="InParanoid" id="Q9ZBX9"/>
<dbReference type="OrthoDB" id="4537997at2"/>
<dbReference type="PhylomeDB" id="Q9ZBX9"/>
<dbReference type="Proteomes" id="UP000001973">
    <property type="component" value="Chromosome"/>
</dbReference>
<dbReference type="GO" id="GO:0003950">
    <property type="term" value="F:NAD+ poly-ADP-ribosyltransferase activity"/>
    <property type="evidence" value="ECO:0007669"/>
    <property type="project" value="InterPro"/>
</dbReference>
<dbReference type="GO" id="GO:0000215">
    <property type="term" value="F:tRNA 2'-phosphotransferase activity"/>
    <property type="evidence" value="ECO:0000318"/>
    <property type="project" value="GO_Central"/>
</dbReference>
<dbReference type="GO" id="GO:0008033">
    <property type="term" value="P:tRNA processing"/>
    <property type="evidence" value="ECO:0000318"/>
    <property type="project" value="GO_Central"/>
</dbReference>
<dbReference type="GO" id="GO:0006388">
    <property type="term" value="P:tRNA splicing, via endonucleolytic cleavage and ligation"/>
    <property type="evidence" value="ECO:0007669"/>
    <property type="project" value="UniProtKB-UniRule"/>
</dbReference>
<dbReference type="Gene3D" id="3.20.170.30">
    <property type="match status" value="1"/>
</dbReference>
<dbReference type="Gene3D" id="1.10.10.970">
    <property type="entry name" value="RNA 2'-phosphotransferase, Tpt1/KptA family, N-terminal domain"/>
    <property type="match status" value="1"/>
</dbReference>
<dbReference type="HAMAP" id="MF_00299">
    <property type="entry name" value="KptA"/>
    <property type="match status" value="1"/>
</dbReference>
<dbReference type="InterPro" id="IPR002745">
    <property type="entry name" value="Ptrans_KptA/Tpt1"/>
</dbReference>
<dbReference type="InterPro" id="IPR042081">
    <property type="entry name" value="RNA_2'-PTrans_C"/>
</dbReference>
<dbReference type="InterPro" id="IPR022928">
    <property type="entry name" value="RNA_2'-PTrans_KptA"/>
</dbReference>
<dbReference type="InterPro" id="IPR042080">
    <property type="entry name" value="RNA_2'-PTrans_N"/>
</dbReference>
<dbReference type="NCBIfam" id="NF002014">
    <property type="entry name" value="PRK00819.1-4"/>
    <property type="match status" value="1"/>
</dbReference>
<dbReference type="PANTHER" id="PTHR12684">
    <property type="entry name" value="PUTATIVE PHOSPHOTRANSFERASE"/>
    <property type="match status" value="1"/>
</dbReference>
<dbReference type="PANTHER" id="PTHR12684:SF2">
    <property type="entry name" value="TRNA 2'-PHOSPHOTRANSFERASE 1"/>
    <property type="match status" value="1"/>
</dbReference>
<dbReference type="Pfam" id="PF01885">
    <property type="entry name" value="PTS_2-RNA"/>
    <property type="match status" value="1"/>
</dbReference>
<dbReference type="SUPFAM" id="SSF56399">
    <property type="entry name" value="ADP-ribosylation"/>
    <property type="match status" value="1"/>
</dbReference>
<feature type="chain" id="PRO_0000157483" description="Probable RNA 2'-phosphotransferase">
    <location>
        <begin position="1"/>
        <end position="182"/>
    </location>
</feature>
<name>KPTA_STRCO</name>
<proteinExistence type="inferred from homology"/>
<gene>
    <name type="primary">kptA</name>
    <name type="ordered locus">SCO3953</name>
    <name type="ORF">SCD78.20c</name>
</gene>
<reference key="1">
    <citation type="journal article" date="2002" name="Nature">
        <title>Complete genome sequence of the model actinomycete Streptomyces coelicolor A3(2).</title>
        <authorList>
            <person name="Bentley S.D."/>
            <person name="Chater K.F."/>
            <person name="Cerdeno-Tarraga A.-M."/>
            <person name="Challis G.L."/>
            <person name="Thomson N.R."/>
            <person name="James K.D."/>
            <person name="Harris D.E."/>
            <person name="Quail M.A."/>
            <person name="Kieser H."/>
            <person name="Harper D."/>
            <person name="Bateman A."/>
            <person name="Brown S."/>
            <person name="Chandra G."/>
            <person name="Chen C.W."/>
            <person name="Collins M."/>
            <person name="Cronin A."/>
            <person name="Fraser A."/>
            <person name="Goble A."/>
            <person name="Hidalgo J."/>
            <person name="Hornsby T."/>
            <person name="Howarth S."/>
            <person name="Huang C.-H."/>
            <person name="Kieser T."/>
            <person name="Larke L."/>
            <person name="Murphy L.D."/>
            <person name="Oliver K."/>
            <person name="O'Neil S."/>
            <person name="Rabbinowitsch E."/>
            <person name="Rajandream M.A."/>
            <person name="Rutherford K.M."/>
            <person name="Rutter S."/>
            <person name="Seeger K."/>
            <person name="Saunders D."/>
            <person name="Sharp S."/>
            <person name="Squares R."/>
            <person name="Squares S."/>
            <person name="Taylor K."/>
            <person name="Warren T."/>
            <person name="Wietzorrek A."/>
            <person name="Woodward J.R."/>
            <person name="Barrell B.G."/>
            <person name="Parkhill J."/>
            <person name="Hopwood D.A."/>
        </authorList>
    </citation>
    <scope>NUCLEOTIDE SEQUENCE [LARGE SCALE GENOMIC DNA]</scope>
    <source>
        <strain>ATCC BAA-471 / A3(2) / M145</strain>
    </source>
</reference>
<organism>
    <name type="scientific">Streptomyces coelicolor (strain ATCC BAA-471 / A3(2) / M145)</name>
    <dbReference type="NCBI Taxonomy" id="100226"/>
    <lineage>
        <taxon>Bacteria</taxon>
        <taxon>Bacillati</taxon>
        <taxon>Actinomycetota</taxon>
        <taxon>Actinomycetes</taxon>
        <taxon>Kitasatosporales</taxon>
        <taxon>Streptomycetaceae</taxon>
        <taxon>Streptomyces</taxon>
        <taxon>Streptomyces albidoflavus group</taxon>
    </lineage>
</organism>
<keyword id="KW-0520">NAD</keyword>
<keyword id="KW-1185">Reference proteome</keyword>
<keyword id="KW-0808">Transferase</keyword>
<evidence type="ECO:0000250" key="1"/>
<evidence type="ECO:0000305" key="2"/>
<comment type="function">
    <text evidence="1">Removes the 2'-phosphate from RNA via an intermediate in which the phosphate is ADP-ribosylated by NAD followed by a presumed transesterification to release the RNA and generate ADP-ribose 1''-2''-cyclic phosphate (APPR&gt;P). May function as an ADP-ribosylase (By similarity).</text>
</comment>
<comment type="similarity">
    <text evidence="2">Belongs to the KptA/TPT1 family.</text>
</comment>
<sequence length="182" mass="20415">MQQERTVKVSKYLSKHLRHQPERIGLTPDEGGWVEIDALVAAAAAHGFPFTRQELDHVVATNDKRRFAVEGTRIRASQGHSIAVDLRLPVATPPPYLYHGTVARHLEAIRAEGLRPMNRHDVHLSPDRETATRVGARRGRPVVLPVDAATMHRDGHVFHVSANGVWLTQHVPSRYLRFPAPH</sequence>
<protein>
    <recommendedName>
        <fullName>Probable RNA 2'-phosphotransferase</fullName>
        <ecNumber>2.7.1.-</ecNumber>
    </recommendedName>
</protein>